<protein>
    <recommendedName>
        <fullName evidence="1">tRNA-2-methylthio-N(6)-dimethylallyladenosine synthase</fullName>
        <ecNumber evidence="1">2.8.4.3</ecNumber>
    </recommendedName>
    <alternativeName>
        <fullName evidence="1">(Dimethylallyl)adenosine tRNA methylthiotransferase MiaB</fullName>
    </alternativeName>
    <alternativeName>
        <fullName evidence="1">tRNA-i(6)A37 methylthiotransferase</fullName>
    </alternativeName>
</protein>
<feature type="chain" id="PRO_0000374213" description="tRNA-2-methylthio-N(6)-dimethylallyladenosine synthase">
    <location>
        <begin position="1"/>
        <end position="451"/>
    </location>
</feature>
<feature type="domain" description="MTTase N-terminal" evidence="1">
    <location>
        <begin position="18"/>
        <end position="134"/>
    </location>
</feature>
<feature type="domain" description="Radical SAM core" evidence="2">
    <location>
        <begin position="156"/>
        <end position="386"/>
    </location>
</feature>
<feature type="domain" description="TRAM" evidence="1">
    <location>
        <begin position="389"/>
        <end position="451"/>
    </location>
</feature>
<feature type="binding site" evidence="1">
    <location>
        <position position="27"/>
    </location>
    <ligand>
        <name>[4Fe-4S] cluster</name>
        <dbReference type="ChEBI" id="CHEBI:49883"/>
        <label>1</label>
    </ligand>
</feature>
<feature type="binding site" evidence="1">
    <location>
        <position position="63"/>
    </location>
    <ligand>
        <name>[4Fe-4S] cluster</name>
        <dbReference type="ChEBI" id="CHEBI:49883"/>
        <label>1</label>
    </ligand>
</feature>
<feature type="binding site" evidence="1">
    <location>
        <position position="97"/>
    </location>
    <ligand>
        <name>[4Fe-4S] cluster</name>
        <dbReference type="ChEBI" id="CHEBI:49883"/>
        <label>1</label>
    </ligand>
</feature>
<feature type="binding site" evidence="1">
    <location>
        <position position="170"/>
    </location>
    <ligand>
        <name>[4Fe-4S] cluster</name>
        <dbReference type="ChEBI" id="CHEBI:49883"/>
        <label>2</label>
        <note>4Fe-4S-S-AdoMet</note>
    </ligand>
</feature>
<feature type="binding site" evidence="1">
    <location>
        <position position="174"/>
    </location>
    <ligand>
        <name>[4Fe-4S] cluster</name>
        <dbReference type="ChEBI" id="CHEBI:49883"/>
        <label>2</label>
        <note>4Fe-4S-S-AdoMet</note>
    </ligand>
</feature>
<feature type="binding site" evidence="1">
    <location>
        <position position="177"/>
    </location>
    <ligand>
        <name>[4Fe-4S] cluster</name>
        <dbReference type="ChEBI" id="CHEBI:49883"/>
        <label>2</label>
        <note>4Fe-4S-S-AdoMet</note>
    </ligand>
</feature>
<name>MIAB_CHLT3</name>
<dbReference type="EC" id="2.8.4.3" evidence="1"/>
<dbReference type="EMBL" id="CP001100">
    <property type="protein sequence ID" value="ACF13054.1"/>
    <property type="molecule type" value="Genomic_DNA"/>
</dbReference>
<dbReference type="RefSeq" id="WP_012499138.1">
    <property type="nucleotide sequence ID" value="NC_011026.1"/>
</dbReference>
<dbReference type="SMR" id="B3QVA0"/>
<dbReference type="STRING" id="517418.Ctha_0583"/>
<dbReference type="KEGG" id="cts:Ctha_0583"/>
<dbReference type="eggNOG" id="COG0621">
    <property type="taxonomic scope" value="Bacteria"/>
</dbReference>
<dbReference type="HOGENOM" id="CLU_018697_2_1_10"/>
<dbReference type="OrthoDB" id="9805215at2"/>
<dbReference type="Proteomes" id="UP000001208">
    <property type="component" value="Chromosome"/>
</dbReference>
<dbReference type="GO" id="GO:0005829">
    <property type="term" value="C:cytosol"/>
    <property type="evidence" value="ECO:0007669"/>
    <property type="project" value="TreeGrafter"/>
</dbReference>
<dbReference type="GO" id="GO:0051539">
    <property type="term" value="F:4 iron, 4 sulfur cluster binding"/>
    <property type="evidence" value="ECO:0007669"/>
    <property type="project" value="UniProtKB-UniRule"/>
</dbReference>
<dbReference type="GO" id="GO:0046872">
    <property type="term" value="F:metal ion binding"/>
    <property type="evidence" value="ECO:0007669"/>
    <property type="project" value="UniProtKB-KW"/>
</dbReference>
<dbReference type="GO" id="GO:0035597">
    <property type="term" value="F:N6-isopentenyladenosine methylthiotransferase activity"/>
    <property type="evidence" value="ECO:0007669"/>
    <property type="project" value="TreeGrafter"/>
</dbReference>
<dbReference type="CDD" id="cd01335">
    <property type="entry name" value="Radical_SAM"/>
    <property type="match status" value="1"/>
</dbReference>
<dbReference type="FunFam" id="3.40.50.12160:FF:000003">
    <property type="entry name" value="CDK5 regulatory subunit-associated protein 1"/>
    <property type="match status" value="1"/>
</dbReference>
<dbReference type="FunFam" id="3.80.30.20:FF:000001">
    <property type="entry name" value="tRNA-2-methylthio-N(6)-dimethylallyladenosine synthase 2"/>
    <property type="match status" value="1"/>
</dbReference>
<dbReference type="Gene3D" id="3.40.50.12160">
    <property type="entry name" value="Methylthiotransferase, N-terminal domain"/>
    <property type="match status" value="1"/>
</dbReference>
<dbReference type="Gene3D" id="2.40.50.140">
    <property type="entry name" value="Nucleic acid-binding proteins"/>
    <property type="match status" value="1"/>
</dbReference>
<dbReference type="Gene3D" id="3.80.30.20">
    <property type="entry name" value="tm_1862 like domain"/>
    <property type="match status" value="1"/>
</dbReference>
<dbReference type="HAMAP" id="MF_01864">
    <property type="entry name" value="tRNA_metthiotr_MiaB"/>
    <property type="match status" value="1"/>
</dbReference>
<dbReference type="InterPro" id="IPR006638">
    <property type="entry name" value="Elp3/MiaA/NifB-like_rSAM"/>
</dbReference>
<dbReference type="InterPro" id="IPR005839">
    <property type="entry name" value="Methylthiotransferase"/>
</dbReference>
<dbReference type="InterPro" id="IPR020612">
    <property type="entry name" value="Methylthiotransferase_CS"/>
</dbReference>
<dbReference type="InterPro" id="IPR013848">
    <property type="entry name" value="Methylthiotransferase_N"/>
</dbReference>
<dbReference type="InterPro" id="IPR038135">
    <property type="entry name" value="Methylthiotransferase_N_sf"/>
</dbReference>
<dbReference type="InterPro" id="IPR006463">
    <property type="entry name" value="MiaB_methiolase"/>
</dbReference>
<dbReference type="InterPro" id="IPR012340">
    <property type="entry name" value="NA-bd_OB-fold"/>
</dbReference>
<dbReference type="InterPro" id="IPR007197">
    <property type="entry name" value="rSAM"/>
</dbReference>
<dbReference type="InterPro" id="IPR023404">
    <property type="entry name" value="rSAM_horseshoe"/>
</dbReference>
<dbReference type="InterPro" id="IPR002792">
    <property type="entry name" value="TRAM_dom"/>
</dbReference>
<dbReference type="NCBIfam" id="TIGR01574">
    <property type="entry name" value="miaB-methiolase"/>
    <property type="match status" value="1"/>
</dbReference>
<dbReference type="NCBIfam" id="TIGR00089">
    <property type="entry name" value="MiaB/RimO family radical SAM methylthiotransferase"/>
    <property type="match status" value="1"/>
</dbReference>
<dbReference type="PANTHER" id="PTHR43020">
    <property type="entry name" value="CDK5 REGULATORY SUBUNIT-ASSOCIATED PROTEIN 1"/>
    <property type="match status" value="1"/>
</dbReference>
<dbReference type="PANTHER" id="PTHR43020:SF2">
    <property type="entry name" value="MITOCHONDRIAL TRNA METHYLTHIOTRANSFERASE CDK5RAP1"/>
    <property type="match status" value="1"/>
</dbReference>
<dbReference type="Pfam" id="PF04055">
    <property type="entry name" value="Radical_SAM"/>
    <property type="match status" value="1"/>
</dbReference>
<dbReference type="Pfam" id="PF01938">
    <property type="entry name" value="TRAM"/>
    <property type="match status" value="1"/>
</dbReference>
<dbReference type="Pfam" id="PF00919">
    <property type="entry name" value="UPF0004"/>
    <property type="match status" value="1"/>
</dbReference>
<dbReference type="SFLD" id="SFLDF00273">
    <property type="entry name" value="(dimethylallyl)adenosine_tRNA"/>
    <property type="match status" value="1"/>
</dbReference>
<dbReference type="SFLD" id="SFLDG01082">
    <property type="entry name" value="B12-binding_domain_containing"/>
    <property type="match status" value="1"/>
</dbReference>
<dbReference type="SFLD" id="SFLDF00413">
    <property type="entry name" value="CDK5RAP1"/>
    <property type="match status" value="1"/>
</dbReference>
<dbReference type="SFLD" id="SFLDG01061">
    <property type="entry name" value="methylthiotransferase"/>
    <property type="match status" value="1"/>
</dbReference>
<dbReference type="SMART" id="SM00729">
    <property type="entry name" value="Elp3"/>
    <property type="match status" value="1"/>
</dbReference>
<dbReference type="SUPFAM" id="SSF102114">
    <property type="entry name" value="Radical SAM enzymes"/>
    <property type="match status" value="1"/>
</dbReference>
<dbReference type="PROSITE" id="PS51449">
    <property type="entry name" value="MTTASE_N"/>
    <property type="match status" value="1"/>
</dbReference>
<dbReference type="PROSITE" id="PS01278">
    <property type="entry name" value="MTTASE_RADICAL"/>
    <property type="match status" value="1"/>
</dbReference>
<dbReference type="PROSITE" id="PS51918">
    <property type="entry name" value="RADICAL_SAM"/>
    <property type="match status" value="1"/>
</dbReference>
<dbReference type="PROSITE" id="PS50926">
    <property type="entry name" value="TRAM"/>
    <property type="match status" value="1"/>
</dbReference>
<keyword id="KW-0004">4Fe-4S</keyword>
<keyword id="KW-0963">Cytoplasm</keyword>
<keyword id="KW-0408">Iron</keyword>
<keyword id="KW-0411">Iron-sulfur</keyword>
<keyword id="KW-0479">Metal-binding</keyword>
<keyword id="KW-1185">Reference proteome</keyword>
<keyword id="KW-0949">S-adenosyl-L-methionine</keyword>
<keyword id="KW-0808">Transferase</keyword>
<keyword id="KW-0819">tRNA processing</keyword>
<proteinExistence type="inferred from homology"/>
<accession>B3QVA0</accession>
<sequence>MKQDKMAEVQSHACNQKARVYLETYGCQMNFSDTEIISSILSDAGYAIAESEQVADIIFLNTCAVRENAEQRIRNRLQNLRPLKKQNPKLIVGVLGCMAERLREKLFQEEKIVDLIAGPDAYRTLPNLLDLAESGEKAANVMLSLEETYADINPLRKNGHSAFLAIMRGCDNMCAFCIVPYTRGRERSRPMTSILDELKQLSDEGTREVTLLGQNVNSYYDENSGTRFANLMDKASLVNPNMRIRFTTSHPKDISSELIDVIAERKNLCEFIHLPVQSGSSRMLELMNRGHTREDYLEKIALIKSKIPNCSISTDMISGFCTETEADHAATLSLLREVRYDYAFTFVYSVRPNTPAATRLNDDVPDDVKQRRLSEVIALQQKISAELYRNDIGNTHEVLIEGESKRSSDMWMGRARNNRVVVFPKNGAQVGDFVNVKITDATSATLIGNAL</sequence>
<organism>
    <name type="scientific">Chloroherpeton thalassium (strain ATCC 35110 / GB-78)</name>
    <dbReference type="NCBI Taxonomy" id="517418"/>
    <lineage>
        <taxon>Bacteria</taxon>
        <taxon>Pseudomonadati</taxon>
        <taxon>Chlorobiota</taxon>
        <taxon>Chlorobiia</taxon>
        <taxon>Chlorobiales</taxon>
        <taxon>Chloroherpetonaceae</taxon>
        <taxon>Chloroherpeton</taxon>
    </lineage>
</organism>
<evidence type="ECO:0000255" key="1">
    <source>
        <dbReference type="HAMAP-Rule" id="MF_01864"/>
    </source>
</evidence>
<evidence type="ECO:0000255" key="2">
    <source>
        <dbReference type="PROSITE-ProRule" id="PRU01266"/>
    </source>
</evidence>
<gene>
    <name evidence="1" type="primary">miaB</name>
    <name type="ordered locus">Ctha_0583</name>
</gene>
<reference key="1">
    <citation type="submission" date="2008-06" db="EMBL/GenBank/DDBJ databases">
        <title>Complete sequence of Chloroherpeton thalassium ATCC 35110.</title>
        <authorList>
            <consortium name="US DOE Joint Genome Institute"/>
            <person name="Lucas S."/>
            <person name="Copeland A."/>
            <person name="Lapidus A."/>
            <person name="Glavina del Rio T."/>
            <person name="Dalin E."/>
            <person name="Tice H."/>
            <person name="Bruce D."/>
            <person name="Goodwin L."/>
            <person name="Pitluck S."/>
            <person name="Schmutz J."/>
            <person name="Larimer F."/>
            <person name="Land M."/>
            <person name="Hauser L."/>
            <person name="Kyrpides N."/>
            <person name="Mikhailova N."/>
            <person name="Liu Z."/>
            <person name="Li T."/>
            <person name="Zhao F."/>
            <person name="Overmann J."/>
            <person name="Bryant D.A."/>
            <person name="Richardson P."/>
        </authorList>
    </citation>
    <scope>NUCLEOTIDE SEQUENCE [LARGE SCALE GENOMIC DNA]</scope>
    <source>
        <strain>ATCC 35110 / GB-78</strain>
    </source>
</reference>
<comment type="function">
    <text evidence="1">Catalyzes the methylthiolation of N6-(dimethylallyl)adenosine (i(6)A), leading to the formation of 2-methylthio-N6-(dimethylallyl)adenosine (ms(2)i(6)A) at position 37 in tRNAs that read codons beginning with uridine.</text>
</comment>
<comment type="catalytic activity">
    <reaction evidence="1">
        <text>N(6)-dimethylallyladenosine(37) in tRNA + (sulfur carrier)-SH + AH2 + 2 S-adenosyl-L-methionine = 2-methylsulfanyl-N(6)-dimethylallyladenosine(37) in tRNA + (sulfur carrier)-H + 5'-deoxyadenosine + L-methionine + A + S-adenosyl-L-homocysteine + 2 H(+)</text>
        <dbReference type="Rhea" id="RHEA:37067"/>
        <dbReference type="Rhea" id="RHEA-COMP:10375"/>
        <dbReference type="Rhea" id="RHEA-COMP:10376"/>
        <dbReference type="Rhea" id="RHEA-COMP:14737"/>
        <dbReference type="Rhea" id="RHEA-COMP:14739"/>
        <dbReference type="ChEBI" id="CHEBI:13193"/>
        <dbReference type="ChEBI" id="CHEBI:15378"/>
        <dbReference type="ChEBI" id="CHEBI:17319"/>
        <dbReference type="ChEBI" id="CHEBI:17499"/>
        <dbReference type="ChEBI" id="CHEBI:29917"/>
        <dbReference type="ChEBI" id="CHEBI:57844"/>
        <dbReference type="ChEBI" id="CHEBI:57856"/>
        <dbReference type="ChEBI" id="CHEBI:59789"/>
        <dbReference type="ChEBI" id="CHEBI:64428"/>
        <dbReference type="ChEBI" id="CHEBI:74415"/>
        <dbReference type="ChEBI" id="CHEBI:74417"/>
        <dbReference type="EC" id="2.8.4.3"/>
    </reaction>
</comment>
<comment type="cofactor">
    <cofactor evidence="1">
        <name>[4Fe-4S] cluster</name>
        <dbReference type="ChEBI" id="CHEBI:49883"/>
    </cofactor>
    <text evidence="1">Binds 2 [4Fe-4S] clusters. One cluster is coordinated with 3 cysteines and an exchangeable S-adenosyl-L-methionine.</text>
</comment>
<comment type="subunit">
    <text evidence="1">Monomer.</text>
</comment>
<comment type="subcellular location">
    <subcellularLocation>
        <location evidence="1">Cytoplasm</location>
    </subcellularLocation>
</comment>
<comment type="similarity">
    <text evidence="1">Belongs to the methylthiotransferase family. MiaB subfamily.</text>
</comment>